<sequence length="112" mass="13115">MPPKNCTHLGGCNSDCLTRSEIQALFREAINTLKHTMNTEDVCAHMLDIVSFERIKEYIRANLGHFTVITDKCSKRKVCLHHKRIARLLGIKKIYHQEYKRVVSKVYKNQTW</sequence>
<dbReference type="EMBL" id="L33180">
    <property type="protein sequence ID" value="AAC63712.1"/>
    <property type="molecule type" value="Genomic_DNA"/>
</dbReference>
<dbReference type="PIR" id="T41783">
    <property type="entry name" value="T41783"/>
</dbReference>
<dbReference type="RefSeq" id="NP_047443.1">
    <property type="nucleotide sequence ID" value="NC_001962.1"/>
</dbReference>
<dbReference type="GeneID" id="1488659"/>
<dbReference type="KEGG" id="vg:1488659"/>
<dbReference type="OrthoDB" id="15391at10239"/>
<dbReference type="Proteomes" id="UP000204315">
    <property type="component" value="Genome"/>
</dbReference>
<dbReference type="GO" id="GO:0006355">
    <property type="term" value="P:regulation of DNA-templated transcription"/>
    <property type="evidence" value="ECO:0007669"/>
    <property type="project" value="InterPro"/>
</dbReference>
<dbReference type="GO" id="GO:0019058">
    <property type="term" value="P:viral life cycle"/>
    <property type="evidence" value="ECO:0007669"/>
    <property type="project" value="InterPro"/>
</dbReference>
<dbReference type="InterPro" id="IPR009429">
    <property type="entry name" value="Baculo_LEF-11"/>
</dbReference>
<dbReference type="Pfam" id="PF06385">
    <property type="entry name" value="Baculo_LEF-11"/>
    <property type="match status" value="1"/>
</dbReference>
<evidence type="ECO:0000250" key="1"/>
<evidence type="ECO:0000305" key="2"/>
<gene>
    <name type="primary">LEF-11</name>
</gene>
<feature type="chain" id="PRO_0000132836" description="Late expression factor 11">
    <location>
        <begin position="1"/>
        <end position="112"/>
    </location>
</feature>
<reference key="1">
    <citation type="journal article" date="1999" name="J. Gen. Virol.">
        <title>Sequence analysis of the genome of Bombyx mori nucleopolyhedrovirus.</title>
        <authorList>
            <person name="Gomi S."/>
            <person name="Majima K."/>
            <person name="Maeda S."/>
        </authorList>
    </citation>
    <scope>NUCLEOTIDE SEQUENCE [LARGE SCALE GENOMIC DNA]</scope>
    <source>
        <strain>T3</strain>
    </source>
</reference>
<keyword id="KW-0804">Transcription</keyword>
<keyword id="KW-0805">Transcription regulation</keyword>
<proteinExistence type="inferred from homology"/>
<name>LEF11_NPVBM</name>
<organism>
    <name type="scientific">Bombyx mori nuclear polyhedrosis virus</name>
    <name type="common">BmNPV</name>
    <dbReference type="NCBI Taxonomy" id="271108"/>
    <lineage>
        <taxon>Viruses</taxon>
        <taxon>Viruses incertae sedis</taxon>
        <taxon>Naldaviricetes</taxon>
        <taxon>Lefavirales</taxon>
        <taxon>Baculoviridae</taxon>
        <taxon>Alphabaculovirus</taxon>
        <taxon>Alphabaculovirus bomori</taxon>
    </lineage>
</organism>
<protein>
    <recommendedName>
        <fullName>Late expression factor 11</fullName>
    </recommendedName>
</protein>
<accession>O92404</accession>
<organismHost>
    <name type="scientific">Bombyx mori</name>
    <name type="common">Silk moth</name>
    <dbReference type="NCBI Taxonomy" id="7091"/>
</organismHost>
<comment type="function">
    <text evidence="1">Involved in late/very late gene activation.</text>
</comment>
<comment type="similarity">
    <text evidence="2">Belongs to the baculoviridae LEF-11 family.</text>
</comment>